<proteinExistence type="evidence at protein level"/>
<protein>
    <recommendedName>
        <fullName>Cytochrome B pre-mRNA-processing protein 2</fullName>
    </recommendedName>
</protein>
<evidence type="ECO:0000269" key="1">
    <source>
    </source>
</evidence>
<evidence type="ECO:0000305" key="2"/>
<keyword id="KW-0496">Mitochondrion</keyword>
<keyword id="KW-0507">mRNA processing</keyword>
<keyword id="KW-0508">mRNA splicing</keyword>
<keyword id="KW-1185">Reference proteome</keyword>
<reference key="1">
    <citation type="journal article" date="1983" name="J. Biol. Chem.">
        <title>Assembly of the mitochondrial membrane system. Characterization of a yeast nuclear gene involved in the processing of the cytochrome b pre-mRNA.</title>
        <authorList>
            <person name="McGraw P."/>
            <person name="Tzagoloff A."/>
        </authorList>
    </citation>
    <scope>NUCLEOTIDE SEQUENCE [GENOMIC DNA]</scope>
</reference>
<reference key="2">
    <citation type="journal article" date="1994" name="Science">
        <title>Complete nucleotide sequence of Saccharomyces cerevisiae chromosome VIII.</title>
        <authorList>
            <person name="Johnston M."/>
            <person name="Andrews S."/>
            <person name="Brinkman R."/>
            <person name="Cooper J."/>
            <person name="Ding H."/>
            <person name="Dover J."/>
            <person name="Du Z."/>
            <person name="Favello A."/>
            <person name="Fulton L."/>
            <person name="Gattung S."/>
            <person name="Geisel C."/>
            <person name="Kirsten J."/>
            <person name="Kucaba T."/>
            <person name="Hillier L.W."/>
            <person name="Jier M."/>
            <person name="Johnston L."/>
            <person name="Langston Y."/>
            <person name="Latreille P."/>
            <person name="Louis E.J."/>
            <person name="Macri C."/>
            <person name="Mardis E."/>
            <person name="Menezes S."/>
            <person name="Mouser L."/>
            <person name="Nhan M."/>
            <person name="Rifkin L."/>
            <person name="Riles L."/>
            <person name="St Peter H."/>
            <person name="Trevaskis E."/>
            <person name="Vaughan K."/>
            <person name="Vignati D."/>
            <person name="Wilcox L."/>
            <person name="Wohldman P."/>
            <person name="Waterston R."/>
            <person name="Wilson R."/>
            <person name="Vaudin M."/>
        </authorList>
    </citation>
    <scope>NUCLEOTIDE SEQUENCE [LARGE SCALE GENOMIC DNA]</scope>
    <source>
        <strain>ATCC 204508 / S288c</strain>
    </source>
</reference>
<reference key="3">
    <citation type="journal article" date="2014" name="G3 (Bethesda)">
        <title>The reference genome sequence of Saccharomyces cerevisiae: Then and now.</title>
        <authorList>
            <person name="Engel S.R."/>
            <person name="Dietrich F.S."/>
            <person name="Fisk D.G."/>
            <person name="Binkley G."/>
            <person name="Balakrishnan R."/>
            <person name="Costanzo M.C."/>
            <person name="Dwight S.S."/>
            <person name="Hitz B.C."/>
            <person name="Karra K."/>
            <person name="Nash R.S."/>
            <person name="Weng S."/>
            <person name="Wong E.D."/>
            <person name="Lloyd P."/>
            <person name="Skrzypek M.S."/>
            <person name="Miyasato S.R."/>
            <person name="Simison M."/>
            <person name="Cherry J.M."/>
        </authorList>
    </citation>
    <scope>GENOME REANNOTATION</scope>
    <source>
        <strain>ATCC 204508 / S288c</strain>
    </source>
</reference>
<reference key="4">
    <citation type="journal article" date="1997" name="Nucleic Acids Res.">
        <title>The Cbp2 protein stimulates the splicing of the omega intron of yeast mitochondria.</title>
        <authorList>
            <person name="Shaw L.C."/>
            <person name="Lewin A.S."/>
        </authorList>
    </citation>
    <scope>CHARACTERIZATION</scope>
</reference>
<reference key="5">
    <citation type="journal article" date="2003" name="Nature">
        <title>Global analysis of protein expression in yeast.</title>
        <authorList>
            <person name="Ghaemmaghami S."/>
            <person name="Huh W.-K."/>
            <person name="Bower K."/>
            <person name="Howson R.W."/>
            <person name="Belle A."/>
            <person name="Dephoure N."/>
            <person name="O'Shea E.K."/>
            <person name="Weissman J.S."/>
        </authorList>
    </citation>
    <scope>LEVEL OF PROTEIN EXPRESSION [LARGE SCALE ANALYSIS]</scope>
</reference>
<dbReference type="EMBL" id="K00138">
    <property type="protein sequence ID" value="AAA63570.1"/>
    <property type="molecule type" value="Genomic_DNA"/>
</dbReference>
<dbReference type="EMBL" id="U11583">
    <property type="protein sequence ID" value="AAB65050.1"/>
    <property type="molecule type" value="Genomic_DNA"/>
</dbReference>
<dbReference type="EMBL" id="BK006934">
    <property type="protein sequence ID" value="DAA06648.1"/>
    <property type="molecule type" value="Genomic_DNA"/>
</dbReference>
<dbReference type="PIR" id="S48930">
    <property type="entry name" value="BWBY"/>
</dbReference>
<dbReference type="RefSeq" id="NP_011825.1">
    <property type="nucleotide sequence ID" value="NM_001179118.1"/>
</dbReference>
<dbReference type="BioGRID" id="36385">
    <property type="interactions" value="102"/>
</dbReference>
<dbReference type="DIP" id="DIP-6581N"/>
<dbReference type="FunCoup" id="P03874">
    <property type="interactions" value="99"/>
</dbReference>
<dbReference type="IntAct" id="P03874">
    <property type="interactions" value="7"/>
</dbReference>
<dbReference type="STRING" id="4932.YHL038C"/>
<dbReference type="iPTMnet" id="P03874"/>
<dbReference type="PaxDb" id="4932-YHL038C"/>
<dbReference type="PeptideAtlas" id="P03874"/>
<dbReference type="TopDownProteomics" id="P03874"/>
<dbReference type="EnsemblFungi" id="YHL038C_mRNA">
    <property type="protein sequence ID" value="YHL038C"/>
    <property type="gene ID" value="YHL038C"/>
</dbReference>
<dbReference type="GeneID" id="856347"/>
<dbReference type="KEGG" id="sce:YHL038C"/>
<dbReference type="AGR" id="SGD:S000001030"/>
<dbReference type="SGD" id="S000001030">
    <property type="gene designation" value="CBP2"/>
</dbReference>
<dbReference type="VEuPathDB" id="FungiDB:YHL038C"/>
<dbReference type="eggNOG" id="ENOG502RYC2">
    <property type="taxonomic scope" value="Eukaryota"/>
</dbReference>
<dbReference type="HOGENOM" id="CLU_029563_0_0_1"/>
<dbReference type="InParanoid" id="P03874"/>
<dbReference type="OMA" id="SHKTLWS"/>
<dbReference type="OrthoDB" id="4069973at2759"/>
<dbReference type="BioCyc" id="YEAST:G3O-31056-MONOMER"/>
<dbReference type="BioGRID-ORCS" id="856347">
    <property type="hits" value="2 hits in 10 CRISPR screens"/>
</dbReference>
<dbReference type="PRO" id="PR:P03874"/>
<dbReference type="Proteomes" id="UP000002311">
    <property type="component" value="Chromosome VIII"/>
</dbReference>
<dbReference type="RNAct" id="P03874">
    <property type="molecule type" value="protein"/>
</dbReference>
<dbReference type="GO" id="GO:0005739">
    <property type="term" value="C:mitochondrion"/>
    <property type="evidence" value="ECO:0000314"/>
    <property type="project" value="SGD"/>
</dbReference>
<dbReference type="GO" id="GO:0003723">
    <property type="term" value="F:RNA binding"/>
    <property type="evidence" value="ECO:0000314"/>
    <property type="project" value="SGD"/>
</dbReference>
<dbReference type="GO" id="GO:0000372">
    <property type="term" value="P:Group I intron splicing"/>
    <property type="evidence" value="ECO:0000314"/>
    <property type="project" value="SGD"/>
</dbReference>
<dbReference type="GO" id="GO:0090615">
    <property type="term" value="P:mitochondrial mRNA processing"/>
    <property type="evidence" value="ECO:0000315"/>
    <property type="project" value="SGD"/>
</dbReference>
<dbReference type="InterPro" id="IPR016424">
    <property type="entry name" value="Cbp2"/>
</dbReference>
<dbReference type="PIRSF" id="PIRSF004611">
    <property type="entry name" value="CBP2"/>
    <property type="match status" value="1"/>
</dbReference>
<feature type="chain" id="PRO_0000089380" description="Cytochrome B pre-mRNA-processing protein 2">
    <location>
        <begin position="1"/>
        <end position="630"/>
    </location>
</feature>
<feature type="sequence conflict" description="In Ref. 1; AAA63570." evidence="2" ref="1">
    <original>G</original>
    <variation>S</variation>
    <location>
        <position position="490"/>
    </location>
</feature>
<gene>
    <name type="primary">CBP2</name>
    <name type="ordered locus">YHL038C</name>
</gene>
<comment type="function">
    <text>Appears to be specifically required for the splicing of the terminal intron (bI5) of the cytochrome b pre-mRNA. Can also stimulates the splicing of the omega intron of the precursor of large ribosomal RNA.</text>
</comment>
<comment type="subcellular location">
    <subcellularLocation>
        <location>Mitochondrion</location>
    </subcellularLocation>
</comment>
<comment type="miscellaneous">
    <text evidence="1">Present with 1360 molecules/cell in log phase SD medium.</text>
</comment>
<organism>
    <name type="scientific">Saccharomyces cerevisiae (strain ATCC 204508 / S288c)</name>
    <name type="common">Baker's yeast</name>
    <dbReference type="NCBI Taxonomy" id="559292"/>
    <lineage>
        <taxon>Eukaryota</taxon>
        <taxon>Fungi</taxon>
        <taxon>Dikarya</taxon>
        <taxon>Ascomycota</taxon>
        <taxon>Saccharomycotina</taxon>
        <taxon>Saccharomycetes</taxon>
        <taxon>Saccharomycetales</taxon>
        <taxon>Saccharomycetaceae</taxon>
        <taxon>Saccharomyces</taxon>
    </lineage>
</organism>
<name>CBP2_YEAST</name>
<sequence length="630" mass="73861">MVNWQTLFMVSLRRQGSSSRYRYKFNMENITHQVFPRCKQAFKKTNLSYEYCDLEGVLYNISLTDLQKLLLRDINAPREHAFKIVRTDLTQKSSKKRIQHWERIAPMFDHPLSLYEKLFSEMDEDFKPSFEWQQLIRVRCKDDKLKLQRVIWPKSIFSNFCRGIGVKKSTYDRLLEQNNGEVPMFVNPANAKPLPLFQVSDEAMIGEFDGIGIFPYFVDKHREFFVTEVDKLKTKIASPLCTLNERKRIEKANAGRILANEEGKPFYLDANSATTRIAGGNVVTLKQLLERSVSHKTLWSKQSNKDRTCPGDILRATILSNDFSIRQLRAEFCKNFILYNIFTILQRNKKSIRSFSGNDNAPSFQFSWNVWDSYIWKQYQETESMKIPTDQASLINYKTKYDSFLHDLQTYSALVISEMKWNQFSIFQNDETTLSRFEHITLILQTVLTKSKMIRIFQPNLYKFMQDDLRPTLMELVGFTESINATIEPGFANEQSLQSANGLKKLANQLLYFEQEIYGEKFRVNRPIQLRPITLSANYKIVILDKKNAIPEIFQTLLKFMTQITTYFVKDLSEVELHGHMHCIDKKMLDKSKFMYLYEEKSNEEVKAASPQKEKIVDNIIGLLSNDEEH</sequence>
<accession>P03874</accession>
<accession>D3DKT1</accession>